<organism>
    <name type="scientific">Vaccinia virus (strain Ankara)</name>
    <name type="common">VACV</name>
    <dbReference type="NCBI Taxonomy" id="126794"/>
    <lineage>
        <taxon>Viruses</taxon>
        <taxon>Varidnaviria</taxon>
        <taxon>Bamfordvirae</taxon>
        <taxon>Nucleocytoviricota</taxon>
        <taxon>Pokkesviricetes</taxon>
        <taxon>Chitovirales</taxon>
        <taxon>Poxviridae</taxon>
        <taxon>Chordopoxvirinae</taxon>
        <taxon>Orthopoxvirus</taxon>
        <taxon>Vaccinia virus</taxon>
    </lineage>
</organism>
<accession>O57248</accession>
<name>A47_VACCA</name>
<sequence length="238" mass="27562">MGNKNIKPSKENRLSILSKDKMDSFKRGSFREKSRATIQRFSSLRREHIKVDHPDKFLELKRGIYEIIQKSSSIDVDKRTKLMSNIKTMMINPFMIEGLMTSLENLDPDNKMSYSSVMILGEFDIINISDNEAAFEFINSLLKSLLLEYSISNDLLYAHINALEYIIKNTFNVPERQLILRGQYLTPIFSDLLKYAGLTIKSNILMWNKQFIKPVSDLYTSIRLLHCVTESYKVIGMG</sequence>
<reference key="1">
    <citation type="journal article" date="1998" name="Virology">
        <title>The complete genomic sequence of the modified vaccinia Ankara strain: comparison with other orthopoxviruses.</title>
        <authorList>
            <person name="Antoine G."/>
            <person name="Scheiflinger F."/>
            <person name="Dorner F."/>
            <person name="Falkner F.G."/>
        </authorList>
    </citation>
    <scope>NUCLEOTIDE SEQUENCE [LARGE SCALE GENOMIC DNA]</scope>
</reference>
<reference key="2">
    <citation type="submission" date="2004-04" db="EMBL/GenBank/DDBJ databases">
        <authorList>
            <person name="Esposito J.J."/>
            <person name="Frace M."/>
            <person name="Sammons S.A."/>
            <person name="Olsen-Rasmussen M.S."/>
            <person name="Osborne J."/>
            <person name="Khristova M."/>
            <person name="Wohlhueter R.M."/>
        </authorList>
    </citation>
    <scope>NUCLEOTIDE SEQUENCE [LARGE SCALE GENOMIC DNA]</scope>
    <source>
        <strain>Isolate Acambis 3000</strain>
    </source>
</reference>
<comment type="similarity">
    <text evidence="1">Belongs to the orthopoxvirus A47 protein family.</text>
</comment>
<feature type="chain" id="PRO_0000099337" description="Protein A47">
    <location>
        <begin position="1"/>
        <end position="238"/>
    </location>
</feature>
<evidence type="ECO:0000305" key="1"/>
<organismHost>
    <name type="scientific">Homo sapiens</name>
    <name type="common">Human</name>
    <dbReference type="NCBI Taxonomy" id="9606"/>
</organismHost>
<gene>
    <name type="ordered locus">MVA160L</name>
    <name type="ordered locus">ACAM3000_MVA_160</name>
</gene>
<proteinExistence type="inferred from homology"/>
<protein>
    <recommendedName>
        <fullName>Protein A47</fullName>
    </recommendedName>
</protein>
<dbReference type="EMBL" id="U94848">
    <property type="protein sequence ID" value="AAB96480.1"/>
    <property type="molecule type" value="Genomic_DNA"/>
</dbReference>
<dbReference type="EMBL" id="AY603355">
    <property type="protein sequence ID" value="AAT10558.1"/>
    <property type="molecule type" value="Genomic_DNA"/>
</dbReference>
<dbReference type="PIR" id="T37433">
    <property type="entry name" value="T37433"/>
</dbReference>
<dbReference type="SMR" id="O57248"/>
<dbReference type="Proteomes" id="UP000159908">
    <property type="component" value="Segment"/>
</dbReference>
<dbReference type="Proteomes" id="UP000172909">
    <property type="component" value="Segment"/>
</dbReference>
<dbReference type="InterPro" id="IPR009402">
    <property type="entry name" value="Orthopox_A47"/>
</dbReference>
<dbReference type="Pfam" id="PF06334">
    <property type="entry name" value="Orthopox_A47"/>
    <property type="match status" value="1"/>
</dbReference>